<organism>
    <name type="scientific">Homo sapiens</name>
    <name type="common">Human</name>
    <dbReference type="NCBI Taxonomy" id="9606"/>
    <lineage>
        <taxon>Eukaryota</taxon>
        <taxon>Metazoa</taxon>
        <taxon>Chordata</taxon>
        <taxon>Craniata</taxon>
        <taxon>Vertebrata</taxon>
        <taxon>Euteleostomi</taxon>
        <taxon>Mammalia</taxon>
        <taxon>Eutheria</taxon>
        <taxon>Euarchontoglires</taxon>
        <taxon>Primates</taxon>
        <taxon>Haplorrhini</taxon>
        <taxon>Catarrhini</taxon>
        <taxon>Hominidae</taxon>
        <taxon>Homo</taxon>
    </lineage>
</organism>
<keyword id="KW-0025">Alternative splicing</keyword>
<keyword id="KW-1185">Reference proteome</keyword>
<feature type="chain" id="PRO_0000320634" description="Protein GVQW3">
    <location>
        <begin position="1"/>
        <end position="254"/>
    </location>
</feature>
<feature type="splice variant" id="VSP_031695" description="In isoform 2." evidence="1">
    <original>ETEPHYVAQAGLELLVSRDPPTLASQSSGIISMSHHAKPKPGVQWCKFQSESTGRRARSADVQGQEKMDVTAQEARTNLPFYL</original>
    <variation>GEPKPRKLDFRSDLSKETRKNSSCLRKKVTGSETWSYLQGEAGGEMPLPVSHPRVHYSASQLLQASSSTSLPPRVAENWFTPW</variation>
    <location>
        <begin position="128"/>
        <end position="210"/>
    </location>
</feature>
<feature type="splice variant" id="VSP_031696" description="In isoform 2." evidence="1">
    <location>
        <begin position="211"/>
        <end position="254"/>
    </location>
</feature>
<comment type="alternative products">
    <event type="alternative splicing"/>
    <isoform>
        <id>Q3ZCU0-1</id>
        <name>1</name>
        <sequence type="displayed"/>
    </isoform>
    <isoform>
        <id>Q3ZCU0-2</id>
        <name>2</name>
        <sequence type="described" ref="VSP_031695 VSP_031696"/>
    </isoform>
</comment>
<name>GVQW3_HUMAN</name>
<accession>Q3ZCU0</accession>
<accession>Q8N9C3</accession>
<gene>
    <name evidence="3" type="primary">GVQW3</name>
</gene>
<sequence length="254" mass="29382">MSDRYLEQRISIKFCVKLNKSASETHHLLKEAYGDEVMSRARVFDWHKRFKEGREDVRDDARSGRPVTHRTDDNIQKVKDLVCSNRQLTVRMMAEELNLDKETVRLILKENLNMRKISAKVISGVLKETEPHYVAQAGLELLVSRDPPTLASQSSGIISMSHHAKPKPGVQWCKFQSESTGRRARSADVQGQEKMDVTAQEARTNLPFYLFVLFRSSMNWMMSMHIREGCLFITRSTNSNANLFRKHPHRHTQK</sequence>
<reference key="1">
    <citation type="journal article" date="2004" name="Nat. Genet.">
        <title>Complete sequencing and characterization of 21,243 full-length human cDNAs.</title>
        <authorList>
            <person name="Ota T."/>
            <person name="Suzuki Y."/>
            <person name="Nishikawa T."/>
            <person name="Otsuki T."/>
            <person name="Sugiyama T."/>
            <person name="Irie R."/>
            <person name="Wakamatsu A."/>
            <person name="Hayashi K."/>
            <person name="Sato H."/>
            <person name="Nagai K."/>
            <person name="Kimura K."/>
            <person name="Makita H."/>
            <person name="Sekine M."/>
            <person name="Obayashi M."/>
            <person name="Nishi T."/>
            <person name="Shibahara T."/>
            <person name="Tanaka T."/>
            <person name="Ishii S."/>
            <person name="Yamamoto J."/>
            <person name="Saito K."/>
            <person name="Kawai Y."/>
            <person name="Isono Y."/>
            <person name="Nakamura Y."/>
            <person name="Nagahari K."/>
            <person name="Murakami K."/>
            <person name="Yasuda T."/>
            <person name="Iwayanagi T."/>
            <person name="Wagatsuma M."/>
            <person name="Shiratori A."/>
            <person name="Sudo H."/>
            <person name="Hosoiri T."/>
            <person name="Kaku Y."/>
            <person name="Kodaira H."/>
            <person name="Kondo H."/>
            <person name="Sugawara M."/>
            <person name="Takahashi M."/>
            <person name="Kanda K."/>
            <person name="Yokoi T."/>
            <person name="Furuya T."/>
            <person name="Kikkawa E."/>
            <person name="Omura Y."/>
            <person name="Abe K."/>
            <person name="Kamihara K."/>
            <person name="Katsuta N."/>
            <person name="Sato K."/>
            <person name="Tanikawa M."/>
            <person name="Yamazaki M."/>
            <person name="Ninomiya K."/>
            <person name="Ishibashi T."/>
            <person name="Yamashita H."/>
            <person name="Murakawa K."/>
            <person name="Fujimori K."/>
            <person name="Tanai H."/>
            <person name="Kimata M."/>
            <person name="Watanabe M."/>
            <person name="Hiraoka S."/>
            <person name="Chiba Y."/>
            <person name="Ishida S."/>
            <person name="Ono Y."/>
            <person name="Takiguchi S."/>
            <person name="Watanabe S."/>
            <person name="Yosida M."/>
            <person name="Hotuta T."/>
            <person name="Kusano J."/>
            <person name="Kanehori K."/>
            <person name="Takahashi-Fujii A."/>
            <person name="Hara H."/>
            <person name="Tanase T.-O."/>
            <person name="Nomura Y."/>
            <person name="Togiya S."/>
            <person name="Komai F."/>
            <person name="Hara R."/>
            <person name="Takeuchi K."/>
            <person name="Arita M."/>
            <person name="Imose N."/>
            <person name="Musashino K."/>
            <person name="Yuuki H."/>
            <person name="Oshima A."/>
            <person name="Sasaki N."/>
            <person name="Aotsuka S."/>
            <person name="Yoshikawa Y."/>
            <person name="Matsunawa H."/>
            <person name="Ichihara T."/>
            <person name="Shiohata N."/>
            <person name="Sano S."/>
            <person name="Moriya S."/>
            <person name="Momiyama H."/>
            <person name="Satoh N."/>
            <person name="Takami S."/>
            <person name="Terashima Y."/>
            <person name="Suzuki O."/>
            <person name="Nakagawa S."/>
            <person name="Senoh A."/>
            <person name="Mizoguchi H."/>
            <person name="Goto Y."/>
            <person name="Shimizu F."/>
            <person name="Wakebe H."/>
            <person name="Hishigaki H."/>
            <person name="Watanabe T."/>
            <person name="Sugiyama A."/>
            <person name="Takemoto M."/>
            <person name="Kawakami B."/>
            <person name="Yamazaki M."/>
            <person name="Watanabe K."/>
            <person name="Kumagai A."/>
            <person name="Itakura S."/>
            <person name="Fukuzumi Y."/>
            <person name="Fujimori Y."/>
            <person name="Komiyama M."/>
            <person name="Tashiro H."/>
            <person name="Tanigami A."/>
            <person name="Fujiwara T."/>
            <person name="Ono T."/>
            <person name="Yamada K."/>
            <person name="Fujii Y."/>
            <person name="Ozaki K."/>
            <person name="Hirao M."/>
            <person name="Ohmori Y."/>
            <person name="Kawabata A."/>
            <person name="Hikiji T."/>
            <person name="Kobatake N."/>
            <person name="Inagaki H."/>
            <person name="Ikema Y."/>
            <person name="Okamoto S."/>
            <person name="Okitani R."/>
            <person name="Kawakami T."/>
            <person name="Noguchi S."/>
            <person name="Itoh T."/>
            <person name="Shigeta K."/>
            <person name="Senba T."/>
            <person name="Matsumura K."/>
            <person name="Nakajima Y."/>
            <person name="Mizuno T."/>
            <person name="Morinaga M."/>
            <person name="Sasaki M."/>
            <person name="Togashi T."/>
            <person name="Oyama M."/>
            <person name="Hata H."/>
            <person name="Watanabe M."/>
            <person name="Komatsu T."/>
            <person name="Mizushima-Sugano J."/>
            <person name="Satoh T."/>
            <person name="Shirai Y."/>
            <person name="Takahashi Y."/>
            <person name="Nakagawa K."/>
            <person name="Okumura K."/>
            <person name="Nagase T."/>
            <person name="Nomura N."/>
            <person name="Kikuchi H."/>
            <person name="Masuho Y."/>
            <person name="Yamashita R."/>
            <person name="Nakai K."/>
            <person name="Yada T."/>
            <person name="Nakamura Y."/>
            <person name="Ohara O."/>
            <person name="Isogai T."/>
            <person name="Sugano S."/>
        </authorList>
    </citation>
    <scope>NUCLEOTIDE SEQUENCE [LARGE SCALE MRNA] (ISOFORM 2)</scope>
    <source>
        <tissue>Hippocampus</tissue>
    </source>
</reference>
<reference key="2">
    <citation type="journal article" date="2006" name="Nature">
        <title>Human chromosome 11 DNA sequence and analysis including novel gene identification.</title>
        <authorList>
            <person name="Taylor T.D."/>
            <person name="Noguchi H."/>
            <person name="Totoki Y."/>
            <person name="Toyoda A."/>
            <person name="Kuroki Y."/>
            <person name="Dewar K."/>
            <person name="Lloyd C."/>
            <person name="Itoh T."/>
            <person name="Takeda T."/>
            <person name="Kim D.-W."/>
            <person name="She X."/>
            <person name="Barlow K.F."/>
            <person name="Bloom T."/>
            <person name="Bruford E."/>
            <person name="Chang J.L."/>
            <person name="Cuomo C.A."/>
            <person name="Eichler E."/>
            <person name="FitzGerald M.G."/>
            <person name="Jaffe D.B."/>
            <person name="LaButti K."/>
            <person name="Nicol R."/>
            <person name="Park H.-S."/>
            <person name="Seaman C."/>
            <person name="Sougnez C."/>
            <person name="Yang X."/>
            <person name="Zimmer A.R."/>
            <person name="Zody M.C."/>
            <person name="Birren B.W."/>
            <person name="Nusbaum C."/>
            <person name="Fujiyama A."/>
            <person name="Hattori M."/>
            <person name="Rogers J."/>
            <person name="Lander E.S."/>
            <person name="Sakaki Y."/>
        </authorList>
    </citation>
    <scope>NUCLEOTIDE SEQUENCE [LARGE SCALE GENOMIC DNA]</scope>
</reference>
<reference key="3">
    <citation type="journal article" date="2004" name="Genome Res.">
        <title>The status, quality, and expansion of the NIH full-length cDNA project: the Mammalian Gene Collection (MGC).</title>
        <authorList>
            <consortium name="The MGC Project Team"/>
        </authorList>
    </citation>
    <scope>NUCLEOTIDE SEQUENCE [LARGE SCALE MRNA] (ISOFORM 1)</scope>
    <source>
        <tissue>Brain</tissue>
    </source>
</reference>
<proteinExistence type="evidence at transcript level"/>
<evidence type="ECO:0000303" key="1">
    <source>
    </source>
</evidence>
<evidence type="ECO:0000305" key="2"/>
<evidence type="ECO:0000312" key="3">
    <source>
        <dbReference type="HGNC" id="HGNC:51239"/>
    </source>
</evidence>
<protein>
    <recommendedName>
        <fullName evidence="2">Protein GVQW3</fullName>
    </recommendedName>
    <alternativeName>
        <fullName evidence="2">GVQW motif-containing protein 3</fullName>
    </alternativeName>
</protein>
<dbReference type="EMBL" id="AK095089">
    <property type="protein sequence ID" value="BAC04485.1"/>
    <property type="molecule type" value="mRNA"/>
</dbReference>
<dbReference type="EMBL" id="AP002360">
    <property type="status" value="NOT_ANNOTATED_CDS"/>
    <property type="molecule type" value="Genomic_DNA"/>
</dbReference>
<dbReference type="EMBL" id="BC040665">
    <property type="status" value="NOT_ANNOTATED_CDS"/>
    <property type="molecule type" value="mRNA"/>
</dbReference>
<dbReference type="CCDS" id="CCDS73348.1">
    <molecule id="Q3ZCU0-1"/>
</dbReference>
<dbReference type="CCDS" id="CCDS81599.1">
    <molecule id="Q3ZCU0-2"/>
</dbReference>
<dbReference type="RefSeq" id="NP_001269385.1">
    <molecule id="Q3ZCU0-1"/>
    <property type="nucleotide sequence ID" value="NM_001282456.4"/>
</dbReference>
<dbReference type="RefSeq" id="NP_001292154.1">
    <molecule id="Q3ZCU0-2"/>
    <property type="nucleotide sequence ID" value="NM_001305225.4"/>
</dbReference>
<dbReference type="SMR" id="Q3ZCU0"/>
<dbReference type="BioGRID" id="132445">
    <property type="interactions" value="2"/>
</dbReference>
<dbReference type="FunCoup" id="Q3ZCU0">
    <property type="interactions" value="5"/>
</dbReference>
<dbReference type="GlyGen" id="Q3ZCU0">
    <property type="glycosylation" value="1 site, 1 O-linked glycan (1 site)"/>
</dbReference>
<dbReference type="iPTMnet" id="Q3ZCU0"/>
<dbReference type="PhosphoSitePlus" id="Q3ZCU0"/>
<dbReference type="BioMuta" id="-"/>
<dbReference type="DMDM" id="121943108"/>
<dbReference type="jPOST" id="Q3ZCU0"/>
<dbReference type="MassIVE" id="Q3ZCU0"/>
<dbReference type="PaxDb" id="9606-ENSP00000323821"/>
<dbReference type="PeptideAtlas" id="Q3ZCU0"/>
<dbReference type="Antibodypedia" id="71842">
    <property type="antibodies" value="4 antibodies from 4 providers"/>
</dbReference>
<dbReference type="DNASU" id="100506127"/>
<dbReference type="Ensembl" id="ENST00000321844.6">
    <molecule id="Q3ZCU0-1"/>
    <property type="protein sequence ID" value="ENSP00000323821.4"/>
    <property type="gene ID" value="ENSG00000179240.13"/>
</dbReference>
<dbReference type="Ensembl" id="ENST00000530460.2">
    <molecule id="Q3ZCU0-2"/>
    <property type="protein sequence ID" value="ENSP00000489606.1"/>
    <property type="gene ID" value="ENSG00000179240.13"/>
</dbReference>
<dbReference type="Ensembl" id="ENST00000607673.2">
    <molecule id="Q3ZCU0-2"/>
    <property type="protein sequence ID" value="ENSP00000499448.1"/>
    <property type="gene ID" value="ENSG00000179240.13"/>
</dbReference>
<dbReference type="Ensembl" id="ENST00000663165.1">
    <molecule id="Q3ZCU0-2"/>
    <property type="protein sequence ID" value="ENSP00000499610.1"/>
    <property type="gene ID" value="ENSG00000179240.13"/>
</dbReference>
<dbReference type="GeneID" id="100506127"/>
<dbReference type="KEGG" id="hsa:100506127"/>
<dbReference type="UCSC" id="uc031xvt.2">
    <molecule id="Q3ZCU0-1"/>
    <property type="organism name" value="human"/>
</dbReference>
<dbReference type="AGR" id="HGNC:51239"/>
<dbReference type="CTD" id="100506127"/>
<dbReference type="DisGeNET" id="100506127"/>
<dbReference type="GeneCards" id="GVQW3"/>
<dbReference type="HGNC" id="HGNC:51239">
    <property type="gene designation" value="GVQW3"/>
</dbReference>
<dbReference type="HPA" id="ENSG00000179240">
    <property type="expression patterns" value="Tissue enhanced (retina)"/>
</dbReference>
<dbReference type="neXtProt" id="NX_Q3ZCU0"/>
<dbReference type="VEuPathDB" id="HostDB:ENSG00000179240"/>
<dbReference type="eggNOG" id="ENOG502S5UP">
    <property type="taxonomic scope" value="Eukaryota"/>
</dbReference>
<dbReference type="GeneTree" id="ENSGT00440000033232"/>
<dbReference type="HOGENOM" id="CLU_1098209_0_0_1"/>
<dbReference type="InParanoid" id="Q3ZCU0"/>
<dbReference type="OMA" id="HLQCEAG"/>
<dbReference type="OrthoDB" id="616263at2759"/>
<dbReference type="PAN-GO" id="Q3ZCU0">
    <property type="GO annotations" value="0 GO annotations based on evolutionary models"/>
</dbReference>
<dbReference type="PhylomeDB" id="Q3ZCU0"/>
<dbReference type="BioGRID-ORCS" id="100506127">
    <property type="hits" value="0 hits in 64 CRISPR screens"/>
</dbReference>
<dbReference type="ChiTaRS" id="GVQW3">
    <property type="organism name" value="human"/>
</dbReference>
<dbReference type="GenomeRNAi" id="100506127"/>
<dbReference type="Pharos" id="Q3ZCU0">
    <property type="development level" value="Tdark"/>
</dbReference>
<dbReference type="PRO" id="PR:Q3ZCU0"/>
<dbReference type="Proteomes" id="UP000005640">
    <property type="component" value="Chromosome 11"/>
</dbReference>
<dbReference type="RNAct" id="Q3ZCU0">
    <property type="molecule type" value="protein"/>
</dbReference>
<dbReference type="Bgee" id="ENSG00000179240">
    <property type="expression patterns" value="Expressed in cortical plate and 132 other cell types or tissues"/>
</dbReference>
<dbReference type="ExpressionAtlas" id="Q3ZCU0">
    <property type="expression patterns" value="baseline and differential"/>
</dbReference>
<dbReference type="Gene3D" id="1.10.10.1450">
    <property type="match status" value="1"/>
</dbReference>
<dbReference type="InterPro" id="IPR041426">
    <property type="entry name" value="Mos1_HTH"/>
</dbReference>
<dbReference type="InterPro" id="IPR052709">
    <property type="entry name" value="Transposase-MT_Hybrid"/>
</dbReference>
<dbReference type="PANTHER" id="PTHR46060">
    <property type="entry name" value="MARINER MOS1 TRANSPOSASE-LIKE PROTEIN"/>
    <property type="match status" value="1"/>
</dbReference>
<dbReference type="PANTHER" id="PTHR46060:SF3">
    <property type="entry name" value="PROTEIN GVQW3"/>
    <property type="match status" value="1"/>
</dbReference>
<dbReference type="Pfam" id="PF17906">
    <property type="entry name" value="HTH_48"/>
    <property type="match status" value="1"/>
</dbReference>
<dbReference type="PRINTS" id="PR02045">
    <property type="entry name" value="F138DOMAIN"/>
</dbReference>